<protein>
    <recommendedName>
        <fullName evidence="1">Biotin synthase</fullName>
        <ecNumber evidence="1">2.8.1.6</ecNumber>
    </recommendedName>
</protein>
<evidence type="ECO:0000255" key="1">
    <source>
        <dbReference type="HAMAP-Rule" id="MF_01694"/>
    </source>
</evidence>
<evidence type="ECO:0000255" key="2">
    <source>
        <dbReference type="PROSITE-ProRule" id="PRU01266"/>
    </source>
</evidence>
<evidence type="ECO:0000305" key="3"/>
<comment type="function">
    <text evidence="1">Catalyzes the conversion of dethiobiotin (DTB) to biotin by the insertion of a sulfur atom into dethiobiotin via a radical-based mechanism.</text>
</comment>
<comment type="catalytic activity">
    <reaction evidence="1">
        <text>(4R,5S)-dethiobiotin + (sulfur carrier)-SH + 2 reduced [2Fe-2S]-[ferredoxin] + 2 S-adenosyl-L-methionine = (sulfur carrier)-H + biotin + 2 5'-deoxyadenosine + 2 L-methionine + 2 oxidized [2Fe-2S]-[ferredoxin]</text>
        <dbReference type="Rhea" id="RHEA:22060"/>
        <dbReference type="Rhea" id="RHEA-COMP:10000"/>
        <dbReference type="Rhea" id="RHEA-COMP:10001"/>
        <dbReference type="Rhea" id="RHEA-COMP:14737"/>
        <dbReference type="Rhea" id="RHEA-COMP:14739"/>
        <dbReference type="ChEBI" id="CHEBI:17319"/>
        <dbReference type="ChEBI" id="CHEBI:29917"/>
        <dbReference type="ChEBI" id="CHEBI:33737"/>
        <dbReference type="ChEBI" id="CHEBI:33738"/>
        <dbReference type="ChEBI" id="CHEBI:57586"/>
        <dbReference type="ChEBI" id="CHEBI:57844"/>
        <dbReference type="ChEBI" id="CHEBI:59789"/>
        <dbReference type="ChEBI" id="CHEBI:64428"/>
        <dbReference type="ChEBI" id="CHEBI:149473"/>
        <dbReference type="EC" id="2.8.1.6"/>
    </reaction>
</comment>
<comment type="cofactor">
    <cofactor evidence="1">
        <name>[4Fe-4S] cluster</name>
        <dbReference type="ChEBI" id="CHEBI:49883"/>
    </cofactor>
    <text evidence="1">Binds 1 [4Fe-4S] cluster. The cluster is coordinated with 3 cysteines and an exchangeable S-adenosyl-L-methionine.</text>
</comment>
<comment type="cofactor">
    <cofactor evidence="1">
        <name>[2Fe-2S] cluster</name>
        <dbReference type="ChEBI" id="CHEBI:190135"/>
    </cofactor>
    <text evidence="1">Binds 1 [2Fe-2S] cluster. The cluster is coordinated with 3 cysteines and 1 arginine.</text>
</comment>
<comment type="pathway">
    <text evidence="1">Cofactor biosynthesis; biotin biosynthesis; biotin from 7,8-diaminononanoate: step 2/2.</text>
</comment>
<comment type="subunit">
    <text evidence="1">Homodimer.</text>
</comment>
<comment type="similarity">
    <text evidence="1">Belongs to the radical SAM superfamily. Biotin synthase family.</text>
</comment>
<comment type="sequence caution" evidence="3">
    <conflict type="erroneous initiation">
        <sequence resource="EMBL-CDS" id="AAW61767"/>
    </conflict>
</comment>
<accession>Q5FPC9</accession>
<reference key="1">
    <citation type="journal article" date="2005" name="Nat. Biotechnol.">
        <title>Complete genome sequence of the acetic acid bacterium Gluconobacter oxydans.</title>
        <authorList>
            <person name="Prust C."/>
            <person name="Hoffmeister M."/>
            <person name="Liesegang H."/>
            <person name="Wiezer A."/>
            <person name="Fricke W.F."/>
            <person name="Ehrenreich A."/>
            <person name="Gottschalk G."/>
            <person name="Deppenmeier U."/>
        </authorList>
    </citation>
    <scope>NUCLEOTIDE SEQUENCE [LARGE SCALE GENOMIC DNA]</scope>
    <source>
        <strain>621H</strain>
    </source>
</reference>
<organism>
    <name type="scientific">Gluconobacter oxydans (strain 621H)</name>
    <name type="common">Gluconobacter suboxydans</name>
    <dbReference type="NCBI Taxonomy" id="290633"/>
    <lineage>
        <taxon>Bacteria</taxon>
        <taxon>Pseudomonadati</taxon>
        <taxon>Pseudomonadota</taxon>
        <taxon>Alphaproteobacteria</taxon>
        <taxon>Acetobacterales</taxon>
        <taxon>Acetobacteraceae</taxon>
        <taxon>Gluconobacter</taxon>
    </lineage>
</organism>
<feature type="chain" id="PRO_0000381410" description="Biotin synthase">
    <location>
        <begin position="1"/>
        <end position="336"/>
    </location>
</feature>
<feature type="domain" description="Radical SAM core" evidence="2">
    <location>
        <begin position="36"/>
        <end position="263"/>
    </location>
</feature>
<feature type="binding site" evidence="1">
    <location>
        <position position="51"/>
    </location>
    <ligand>
        <name>[4Fe-4S] cluster</name>
        <dbReference type="ChEBI" id="CHEBI:49883"/>
        <note>4Fe-4S-S-AdoMet</note>
    </ligand>
</feature>
<feature type="binding site" evidence="1">
    <location>
        <position position="55"/>
    </location>
    <ligand>
        <name>[4Fe-4S] cluster</name>
        <dbReference type="ChEBI" id="CHEBI:49883"/>
        <note>4Fe-4S-S-AdoMet</note>
    </ligand>
</feature>
<feature type="binding site" evidence="1">
    <location>
        <position position="58"/>
    </location>
    <ligand>
        <name>[4Fe-4S] cluster</name>
        <dbReference type="ChEBI" id="CHEBI:49883"/>
        <note>4Fe-4S-S-AdoMet</note>
    </ligand>
</feature>
<feature type="binding site" evidence="1">
    <location>
        <position position="95"/>
    </location>
    <ligand>
        <name>[2Fe-2S] cluster</name>
        <dbReference type="ChEBI" id="CHEBI:190135"/>
    </ligand>
</feature>
<feature type="binding site" evidence="1">
    <location>
        <position position="126"/>
    </location>
    <ligand>
        <name>[2Fe-2S] cluster</name>
        <dbReference type="ChEBI" id="CHEBI:190135"/>
    </ligand>
</feature>
<feature type="binding site" evidence="1">
    <location>
        <position position="186"/>
    </location>
    <ligand>
        <name>[2Fe-2S] cluster</name>
        <dbReference type="ChEBI" id="CHEBI:190135"/>
    </ligand>
</feature>
<feature type="binding site" evidence="1">
    <location>
        <position position="258"/>
    </location>
    <ligand>
        <name>[2Fe-2S] cluster</name>
        <dbReference type="ChEBI" id="CHEBI:190135"/>
    </ligand>
</feature>
<sequence>MRHDWTRDEVEALISLPFPELMYRAQTLHRRYFDPTKVQISTLLSIKTGGCPEDCAYCPQSALHEKSVKAERLMAVESVIKEARAAKKAGAGRFCMGAAWRTPKDHDLDTVCEMIEGVKSLGLETCVTLGMLDAQQTERLKKAGLDYYNHNLDTSEEFYGSIISTRTYQQRLDTLSNVRDAGINVCCGGIVGMGEDLSDRAGLLMTLANLPKHPESVPINLLVRVEGTPLGEAEAVDPITFVRIIATARIMMPESHVRLAAGRENMTDEAHALCFLAGANSIFCGEKLLTTPNPAEHRDRQLLSALGMSPMVQSEAEMGTMRPAVTEDAVCEMAVS</sequence>
<dbReference type="EC" id="2.8.1.6" evidence="1"/>
<dbReference type="EMBL" id="CP000009">
    <property type="protein sequence ID" value="AAW61767.1"/>
    <property type="status" value="ALT_INIT"/>
    <property type="molecule type" value="Genomic_DNA"/>
</dbReference>
<dbReference type="RefSeq" id="WP_011253544.1">
    <property type="nucleotide sequence ID" value="NZ_LT900338.1"/>
</dbReference>
<dbReference type="SMR" id="Q5FPC9"/>
<dbReference type="STRING" id="290633.GOX2031"/>
<dbReference type="KEGG" id="gox:GOX2031"/>
<dbReference type="eggNOG" id="COG0502">
    <property type="taxonomic scope" value="Bacteria"/>
</dbReference>
<dbReference type="HOGENOM" id="CLU_033172_1_2_5"/>
<dbReference type="UniPathway" id="UPA00078">
    <property type="reaction ID" value="UER00162"/>
</dbReference>
<dbReference type="Proteomes" id="UP000006375">
    <property type="component" value="Chromosome"/>
</dbReference>
<dbReference type="GO" id="GO:0051537">
    <property type="term" value="F:2 iron, 2 sulfur cluster binding"/>
    <property type="evidence" value="ECO:0007669"/>
    <property type="project" value="UniProtKB-KW"/>
</dbReference>
<dbReference type="GO" id="GO:0051539">
    <property type="term" value="F:4 iron, 4 sulfur cluster binding"/>
    <property type="evidence" value="ECO:0007669"/>
    <property type="project" value="UniProtKB-KW"/>
</dbReference>
<dbReference type="GO" id="GO:0004076">
    <property type="term" value="F:biotin synthase activity"/>
    <property type="evidence" value="ECO:0007669"/>
    <property type="project" value="UniProtKB-UniRule"/>
</dbReference>
<dbReference type="GO" id="GO:0005506">
    <property type="term" value="F:iron ion binding"/>
    <property type="evidence" value="ECO:0007669"/>
    <property type="project" value="UniProtKB-UniRule"/>
</dbReference>
<dbReference type="GO" id="GO:0009102">
    <property type="term" value="P:biotin biosynthetic process"/>
    <property type="evidence" value="ECO:0007669"/>
    <property type="project" value="UniProtKB-UniRule"/>
</dbReference>
<dbReference type="CDD" id="cd01335">
    <property type="entry name" value="Radical_SAM"/>
    <property type="match status" value="1"/>
</dbReference>
<dbReference type="FunFam" id="3.20.20.70:FF:000011">
    <property type="entry name" value="Biotin synthase"/>
    <property type="match status" value="1"/>
</dbReference>
<dbReference type="Gene3D" id="3.20.20.70">
    <property type="entry name" value="Aldolase class I"/>
    <property type="match status" value="1"/>
</dbReference>
<dbReference type="HAMAP" id="MF_01694">
    <property type="entry name" value="BioB"/>
    <property type="match status" value="1"/>
</dbReference>
<dbReference type="InterPro" id="IPR013785">
    <property type="entry name" value="Aldolase_TIM"/>
</dbReference>
<dbReference type="InterPro" id="IPR010722">
    <property type="entry name" value="BATS_dom"/>
</dbReference>
<dbReference type="InterPro" id="IPR002684">
    <property type="entry name" value="Biotin_synth/BioAB"/>
</dbReference>
<dbReference type="InterPro" id="IPR024177">
    <property type="entry name" value="Biotin_synthase"/>
</dbReference>
<dbReference type="InterPro" id="IPR006638">
    <property type="entry name" value="Elp3/MiaA/NifB-like_rSAM"/>
</dbReference>
<dbReference type="InterPro" id="IPR007197">
    <property type="entry name" value="rSAM"/>
</dbReference>
<dbReference type="NCBIfam" id="TIGR00433">
    <property type="entry name" value="bioB"/>
    <property type="match status" value="1"/>
</dbReference>
<dbReference type="PANTHER" id="PTHR22976">
    <property type="entry name" value="BIOTIN SYNTHASE"/>
    <property type="match status" value="1"/>
</dbReference>
<dbReference type="PANTHER" id="PTHR22976:SF2">
    <property type="entry name" value="BIOTIN SYNTHASE, MITOCHONDRIAL"/>
    <property type="match status" value="1"/>
</dbReference>
<dbReference type="Pfam" id="PF06968">
    <property type="entry name" value="BATS"/>
    <property type="match status" value="1"/>
</dbReference>
<dbReference type="Pfam" id="PF04055">
    <property type="entry name" value="Radical_SAM"/>
    <property type="match status" value="1"/>
</dbReference>
<dbReference type="PIRSF" id="PIRSF001619">
    <property type="entry name" value="Biotin_synth"/>
    <property type="match status" value="1"/>
</dbReference>
<dbReference type="SFLD" id="SFLDF00272">
    <property type="entry name" value="biotin_synthase"/>
    <property type="match status" value="1"/>
</dbReference>
<dbReference type="SFLD" id="SFLDG01278">
    <property type="entry name" value="biotin_synthase_like"/>
    <property type="match status" value="1"/>
</dbReference>
<dbReference type="SMART" id="SM00876">
    <property type="entry name" value="BATS"/>
    <property type="match status" value="1"/>
</dbReference>
<dbReference type="SMART" id="SM00729">
    <property type="entry name" value="Elp3"/>
    <property type="match status" value="1"/>
</dbReference>
<dbReference type="SUPFAM" id="SSF102114">
    <property type="entry name" value="Radical SAM enzymes"/>
    <property type="match status" value="1"/>
</dbReference>
<dbReference type="PROSITE" id="PS51918">
    <property type="entry name" value="RADICAL_SAM"/>
    <property type="match status" value="1"/>
</dbReference>
<name>BIOB_GLUOX</name>
<keyword id="KW-0001">2Fe-2S</keyword>
<keyword id="KW-0004">4Fe-4S</keyword>
<keyword id="KW-0093">Biotin biosynthesis</keyword>
<keyword id="KW-0408">Iron</keyword>
<keyword id="KW-0411">Iron-sulfur</keyword>
<keyword id="KW-0479">Metal-binding</keyword>
<keyword id="KW-1185">Reference proteome</keyword>
<keyword id="KW-0949">S-adenosyl-L-methionine</keyword>
<keyword id="KW-0808">Transferase</keyword>
<proteinExistence type="inferred from homology"/>
<gene>
    <name evidence="1" type="primary">bioB</name>
    <name type="ordered locus">GOX2031</name>
</gene>